<organism>
    <name type="scientific">Mus musculus</name>
    <name type="common">Mouse</name>
    <dbReference type="NCBI Taxonomy" id="10090"/>
    <lineage>
        <taxon>Eukaryota</taxon>
        <taxon>Metazoa</taxon>
        <taxon>Chordata</taxon>
        <taxon>Craniata</taxon>
        <taxon>Vertebrata</taxon>
        <taxon>Euteleostomi</taxon>
        <taxon>Mammalia</taxon>
        <taxon>Eutheria</taxon>
        <taxon>Euarchontoglires</taxon>
        <taxon>Glires</taxon>
        <taxon>Rodentia</taxon>
        <taxon>Myomorpha</taxon>
        <taxon>Muroidea</taxon>
        <taxon>Muridae</taxon>
        <taxon>Murinae</taxon>
        <taxon>Mus</taxon>
        <taxon>Mus</taxon>
    </lineage>
</organism>
<evidence type="ECO:0000250" key="1">
    <source>
        <dbReference type="UniProtKB" id="Q13616"/>
    </source>
</evidence>
<evidence type="ECO:0000255" key="2"/>
<evidence type="ECO:0000255" key="3">
    <source>
        <dbReference type="PROSITE-ProRule" id="PRU00330"/>
    </source>
</evidence>
<evidence type="ECO:0000269" key="4">
    <source>
    </source>
</evidence>
<evidence type="ECO:0000269" key="5">
    <source>
    </source>
</evidence>
<evidence type="ECO:0000269" key="6">
    <source>
    </source>
</evidence>
<evidence type="ECO:0000269" key="7">
    <source>
    </source>
</evidence>
<evidence type="ECO:0000269" key="8">
    <source>
    </source>
</evidence>
<evidence type="ECO:0000269" key="9">
    <source>
    </source>
</evidence>
<evidence type="ECO:0000269" key="10">
    <source>
    </source>
</evidence>
<evidence type="ECO:0000269" key="11">
    <source>
    </source>
</evidence>
<evidence type="ECO:0000269" key="12">
    <source>
    </source>
</evidence>
<evidence type="ECO:0000269" key="13">
    <source>
    </source>
</evidence>
<evidence type="ECO:0000305" key="14"/>
<evidence type="ECO:0007744" key="15">
    <source>
    </source>
</evidence>
<feature type="chain" id="PRO_0000119788" description="Cullin-1">
    <location>
        <begin position="1"/>
        <end position="776"/>
    </location>
</feature>
<feature type="domain" description="Cullin neddylation" evidence="2">
    <location>
        <begin position="706"/>
        <end position="766"/>
    </location>
</feature>
<feature type="modified residue" description="Omega-N-methylarginine" evidence="15">
    <location>
        <position position="63"/>
    </location>
</feature>
<feature type="cross-link" description="Glycyl lysine isopeptide (Lys-Gly) (interchain with G-Cter in NEDD8)" evidence="1">
    <location>
        <position position="720"/>
    </location>
</feature>
<feature type="sequence conflict" description="In Ref. 3; AAD34471." evidence="14" ref="3">
    <original>K</original>
    <variation>R</variation>
    <location>
        <position position="74"/>
    </location>
</feature>
<feature type="sequence conflict" description="In Ref. 3; AAD34471." evidence="14" ref="3">
    <original>T</original>
    <variation>S</variation>
    <location>
        <position position="249"/>
    </location>
</feature>
<feature type="sequence conflict" description="In Ref. 3; AAD34471." evidence="14" ref="3">
    <original>Q</original>
    <variation>H</variation>
    <location>
        <position position="308"/>
    </location>
</feature>
<feature type="sequence conflict" description="In Ref. 3; AAD34471." evidence="14" ref="3">
    <original>G</original>
    <variation>R</variation>
    <location>
        <position position="334"/>
    </location>
</feature>
<feature type="sequence conflict" description="In Ref. 3; AAD34471." evidence="14" ref="3">
    <original>LQILLKSKLLVLEDENANVDEVEL</original>
    <variation>YRFTEVEIAGLRDEMPMLMRWM</variation>
    <location>
        <begin position="640"/>
        <end position="663"/>
    </location>
</feature>
<proteinExistence type="evidence at protein level"/>
<protein>
    <recommendedName>
        <fullName>Cullin-1</fullName>
        <shortName>CUL-1</shortName>
    </recommendedName>
</protein>
<accession>Q9WTX6</accession>
<accession>Q9WUI7</accession>
<keyword id="KW-0945">Host-virus interaction</keyword>
<keyword id="KW-1017">Isopeptide bond</keyword>
<keyword id="KW-0488">Methylation</keyword>
<keyword id="KW-1185">Reference proteome</keyword>
<keyword id="KW-0832">Ubl conjugation</keyword>
<keyword id="KW-0833">Ubl conjugation pathway</keyword>
<sequence length="776" mass="89692">MSSNRSQNPHGLKQIGLDQIWDDLRAGIQQVYTRQSMAKSRYMELYTHVYNYCTSVHQSNQARGAGVPPSKSKKGQTPGGAQFVGLELYKRLKEFLKNYLTNLLKDGEDLMDESVLKFYTQQWEDYRFSSKVLNGICAYLNRHWVRRECDEGRKGIYEIYSLALVTWRDCLFRPLNKQVTNAVLKLIEKERNGETINTRLISGVVQSYVELGLNEDDAFAKGPTLTVYKESFESQFLADTERFYTRESTEFLQQNPVTEYMKKAEARLLEEQRRVQVYLHESTQDELARKCEQVLIEKHLEIFHTEFQNLLDADKNEDLGRMYNLVSRIQDGLGELKKLLETHIHNQGLAAIEKCGEAALNDPKMYVQTVLDVHKKYNALVMSAFNNDAGFVAALDKACGRFINNNAVTKMAQSSSKSPELLARYCDSLLKKSSKNPEEAELEDTLNQVMVVFKYIEDKDVFQKFYAKMLAKRLVHQNSASDDAEASMISKLKQACGFEYTSKLQRMFQDIGVSKDLNEQFKKHLTNSEPLDLDFSIQVLSSGSWPFQQSCTFALPSELERSYQRFTAFYASRHSGRKLTWLYQLSKGELVTNCFKNRYTLQASTFQMAILLQYNTEDAYTVQQLTDSTQIKMDILAQVLQILLKSKLLVLEDENANVDEVELKPDTLIKLYLGYKNKKLRVNINVPMKTEQKQEQETTHKNIEEDRKLLIQAAIVRIMKMRKVLKHQQLLGEVLTQLSSRFKPRVPVIKKCIDILIEKEYLERVDGEKDTYSYLA</sequence>
<name>CUL1_MOUSE</name>
<gene>
    <name type="primary">Cul1</name>
</gene>
<reference key="1">
    <citation type="journal article" date="1999" name="Proc. Natl. Acad. Sci. U.S.A.">
        <title>Ubiquitin-dependent degradation of IkappaBalpha is mediated by a ubiquitin ligase Skp1/Cul 1/F-box protein FWD1.</title>
        <authorList>
            <person name="Hatakeyama S."/>
            <person name="Kitagawa M."/>
            <person name="Nakayama K."/>
            <person name="Shirane M."/>
            <person name="Matsumoto M."/>
            <person name="Hattori K."/>
            <person name="Higashi H."/>
            <person name="Nakano H."/>
            <person name="Okumura K."/>
            <person name="Onoe K."/>
            <person name="Good R.A."/>
            <person name="Nakayama K."/>
        </authorList>
    </citation>
    <scope>NUCLEOTIDE SEQUENCE [MRNA]</scope>
    <scope>FUNCTION</scope>
    <scope>IDENTIFICATION IN A COMPLEX WITH PHOSPHORYLATED NFKBIA; SKP1 AND BTRC</scope>
    <source>
        <strain>C57BL/6J</strain>
        <tissue>Brain</tissue>
    </source>
</reference>
<reference key="2">
    <citation type="journal article" date="1999" name="Proc. Natl. Acad. Sci. U.S.A.">
        <authorList>
            <person name="Hatakeyama S."/>
            <person name="Kitagawa M."/>
            <person name="Nakayama K."/>
            <person name="Shirane M."/>
            <person name="Matsumoto M."/>
            <person name="Hattori K."/>
            <person name="Higashi H."/>
            <person name="Nakano H."/>
            <person name="Okumura K."/>
            <person name="Onoe K."/>
            <person name="Good R.A."/>
            <person name="Nakayama K."/>
        </authorList>
    </citation>
    <scope>ERRATUM OF PUBMED:10097128</scope>
</reference>
<reference key="3">
    <citation type="submission" date="1999-08" db="EMBL/GenBank/DDBJ databases">
        <authorList>
            <person name="Filippov V."/>
            <person name="Filippova M."/>
            <person name="Gill S.S."/>
        </authorList>
    </citation>
    <scope>NUCLEOTIDE SEQUENCE [MRNA]</scope>
</reference>
<reference key="4">
    <citation type="journal article" date="1999" name="Nat. Genet.">
        <title>Loss of Cul1 results in early embryonic lethality and dysregulation of cyclin E.</title>
        <authorList>
            <person name="Dealy M.J."/>
            <person name="Nguyen K.V.T."/>
            <person name="Lo J."/>
            <person name="Gstaiger M."/>
            <person name="Krek W."/>
            <person name="Elson D."/>
            <person name="Arbeit J."/>
            <person name="Kipreos E.T."/>
            <person name="Johnson R.S."/>
        </authorList>
    </citation>
    <scope>NUCLEOTIDE SEQUENCE [MRNA]</scope>
    <source>
        <strain>NIH Swiss</strain>
        <tissue>Embryo</tissue>
    </source>
</reference>
<reference key="5">
    <citation type="journal article" date="2004" name="Genome Res.">
        <title>The status, quality, and expansion of the NIH full-length cDNA project: the Mammalian Gene Collection (MGC).</title>
        <authorList>
            <consortium name="The MGC Project Team"/>
        </authorList>
    </citation>
    <scope>NUCLEOTIDE SEQUENCE [LARGE SCALE MRNA]</scope>
    <source>
        <strain>C57BL/6J</strain>
        <tissue>Mammary gland</tissue>
    </source>
</reference>
<reference key="6">
    <citation type="journal article" date="1998" name="Cell Growth Differ.">
        <title>Human CUL-1, but not other cullin family members, selectively interacts with SKP1 to form a complex with SKP2 and cyclin A.</title>
        <authorList>
            <person name="Michel J.J."/>
            <person name="Xiong Y."/>
        </authorList>
    </citation>
    <scope>TISSUE SPECIFICITY</scope>
    <source>
        <tissue>Cervix carcinoma</tissue>
    </source>
</reference>
<reference key="7">
    <citation type="journal article" date="2001" name="Genomics">
        <title>Characterization of a mouse gene (Fbxw6) that encodes a homologue of Caenorhabditis elegans SEL-10.</title>
        <authorList>
            <person name="Maruyama S."/>
            <person name="Hatakeyama S."/>
            <person name="Nakayama K."/>
            <person name="Ishida N."/>
            <person name="Kawakami K."/>
            <person name="Nakayama K."/>
        </authorList>
    </citation>
    <scope>IDENTIFICATION IN A COMPLEX WITH BTRC AND SKP1</scope>
</reference>
<reference key="8">
    <citation type="journal article" date="2002" name="Curr. Biol.">
        <title>The COP9 signalosome inhibits p27(kip1) degradation and impedes G1-S phase progression via deneddylation of SCF Cul1.</title>
        <authorList>
            <person name="Yang X."/>
            <person name="Menon S."/>
            <person name="Lykke-Andersen K."/>
            <person name="Tsuge T."/>
            <person name="Xiao D."/>
            <person name="Wang X."/>
            <person name="Rodriguez-Suarez R.J."/>
            <person name="Zhang H."/>
            <person name="Wei N."/>
        </authorList>
    </citation>
    <scope>INTERACTION WITH COPS2</scope>
</reference>
<reference key="9">
    <citation type="journal article" date="2002" name="Nature">
        <title>E3 ubiquitin ligase that recognizes sugar chains.</title>
        <authorList>
            <person name="Yoshida Y."/>
            <person name="Chiba T."/>
            <person name="Tokunaga F."/>
            <person name="Kawasaki H."/>
            <person name="Iwai K."/>
            <person name="Suzuki T."/>
            <person name="Ito Y."/>
            <person name="Matsuoka K."/>
            <person name="Yoshida M."/>
            <person name="Tanaka K."/>
            <person name="Tai T."/>
        </authorList>
    </citation>
    <scope>FUNCTION</scope>
    <scope>SUBUNIT</scope>
    <scope>PATHWAY</scope>
</reference>
<reference key="10">
    <citation type="journal article" date="2006" name="Mol. Cell. Biol.">
        <title>Fbxw8 is essential for Cul1-Cul7 complex formation and for placental development.</title>
        <authorList>
            <person name="Tsunematsu R."/>
            <person name="Nishiyama M."/>
            <person name="Kotoshiba S."/>
            <person name="Saiga T."/>
            <person name="Kamura T."/>
            <person name="Nakayama K.I."/>
        </authorList>
    </citation>
    <scope>INTERACTION WITH CUL7 AND FBXW8</scope>
</reference>
<reference key="11">
    <citation type="journal article" date="2010" name="Cell">
        <title>A tissue-specific atlas of mouse protein phosphorylation and expression.</title>
        <authorList>
            <person name="Huttlin E.L."/>
            <person name="Jedrychowski M.P."/>
            <person name="Elias J.E."/>
            <person name="Goswami T."/>
            <person name="Rad R."/>
            <person name="Beausoleil S.A."/>
            <person name="Villen J."/>
            <person name="Haas W."/>
            <person name="Sowa M.E."/>
            <person name="Gygi S.P."/>
        </authorList>
    </citation>
    <scope>IDENTIFICATION BY MASS SPECTROMETRY [LARGE SCALE ANALYSIS]</scope>
    <source>
        <tissue>Brain</tissue>
        <tissue>Brown adipose tissue</tissue>
        <tissue>Heart</tissue>
        <tissue>Kidney</tissue>
        <tissue>Liver</tissue>
        <tissue>Lung</tissue>
        <tissue>Pancreas</tissue>
        <tissue>Spleen</tissue>
        <tissue>Testis</tissue>
    </source>
</reference>
<reference key="12">
    <citation type="journal article" date="2010" name="Nat. Cell Biol.">
        <title>A deneddylase encoded by Epstein-Barr virus promotes viral DNA replication by regulating the activity of cullin-RING ligases.</title>
        <authorList>
            <person name="Gastaldello S."/>
            <person name="Hildebrand S."/>
            <person name="Faridani O."/>
            <person name="Callegari S."/>
            <person name="Palmkvist M."/>
            <person name="Di Guglielmo C."/>
            <person name="Masucci M.G."/>
        </authorList>
    </citation>
    <scope>INTERACTION WITH MURINE CYTOMEGALOVIRUS M48 (MICROBIAL INFECTION)</scope>
    <scope>DENEDDYLATION BY MURINE CYTOMEGALOVIRUS M48</scope>
    <scope>NEDDYLATION</scope>
</reference>
<reference key="13">
    <citation type="journal article" date="2013" name="Cell">
        <title>Competing E3 ubiquitin ligases govern circadian periodicity by degradation of CRY in nucleus and cytoplasm.</title>
        <authorList>
            <person name="Yoo S.H."/>
            <person name="Mohawk J.A."/>
            <person name="Siepka S.M."/>
            <person name="Shan Y."/>
            <person name="Huh S.K."/>
            <person name="Hong H.K."/>
            <person name="Kornblum I."/>
            <person name="Kumar V."/>
            <person name="Koike N."/>
            <person name="Xu M."/>
            <person name="Nussbaum J."/>
            <person name="Liu X."/>
            <person name="Chen Z."/>
            <person name="Chen Z.J."/>
            <person name="Green C.B."/>
            <person name="Takahashi J.S."/>
        </authorList>
    </citation>
    <scope>IDENTIFICATION IN THE SCF(FBXL3) COMPLEX</scope>
    <scope>FUNCTION</scope>
</reference>
<reference key="14">
    <citation type="journal article" date="2013" name="Cell">
        <title>FBXL21 regulates oscillation of the circadian clock through ubiquitination and stabilization of cryptochromes.</title>
        <authorList>
            <person name="Hirano A."/>
            <person name="Yumimoto K."/>
            <person name="Tsunematsu R."/>
            <person name="Matsumoto M."/>
            <person name="Oyama M."/>
            <person name="Kozuka-Hata H."/>
            <person name="Nakagawa T."/>
            <person name="Lanjakornsiripan D."/>
            <person name="Nakayama K.I."/>
            <person name="Fukada Y."/>
        </authorList>
    </citation>
    <scope>IDENTIFICATION IN THE SCF(FBXL21) COMPLEX</scope>
    <scope>FUNCTION</scope>
</reference>
<reference key="15">
    <citation type="journal article" date="2013" name="J. Biol. Chem.">
        <title>SCF(Fbxw15) mediates histone acetyltransferase binding to origin recognition complex (HBO1) ubiquitin-proteasomal degradation to regulate cell proliferation.</title>
        <authorList>
            <person name="Zou C."/>
            <person name="Chen Y."/>
            <person name="Smith R.M."/>
            <person name="Snavely C."/>
            <person name="Li J."/>
            <person name="Coon T.A."/>
            <person name="Chen B.B."/>
            <person name="Zhao Y."/>
            <person name="Mallampalli R.K."/>
        </authorList>
    </citation>
    <scope>INTERACTION WITH KAT7</scope>
</reference>
<reference key="16">
    <citation type="journal article" date="2014" name="Mol. Cell. Proteomics">
        <title>Immunoaffinity enrichment and mass spectrometry analysis of protein methylation.</title>
        <authorList>
            <person name="Guo A."/>
            <person name="Gu H."/>
            <person name="Zhou J."/>
            <person name="Mulhern D."/>
            <person name="Wang Y."/>
            <person name="Lee K.A."/>
            <person name="Yang V."/>
            <person name="Aguiar M."/>
            <person name="Kornhauser J."/>
            <person name="Jia X."/>
            <person name="Ren J."/>
            <person name="Beausoleil S.A."/>
            <person name="Silva J.C."/>
            <person name="Vemulapalli V."/>
            <person name="Bedford M.T."/>
            <person name="Comb M.J."/>
        </authorList>
    </citation>
    <scope>METHYLATION [LARGE SCALE ANALYSIS] AT ARG-63</scope>
    <scope>IDENTIFICATION BY MASS SPECTROMETRY [LARGE SCALE ANALYSIS]</scope>
    <source>
        <tissue>Brain</tissue>
    </source>
</reference>
<dbReference type="EMBL" id="AF083216">
    <property type="protein sequence ID" value="AAD16038.1"/>
    <property type="molecule type" value="mRNA"/>
</dbReference>
<dbReference type="EMBL" id="AF176910">
    <property type="protein sequence ID" value="AAD52657.1"/>
    <property type="molecule type" value="mRNA"/>
</dbReference>
<dbReference type="EMBL" id="AF136441">
    <property type="protein sequence ID" value="AAD34471.1"/>
    <property type="molecule type" value="mRNA"/>
</dbReference>
<dbReference type="EMBL" id="BC029260">
    <property type="protein sequence ID" value="AAH29260.1"/>
    <property type="molecule type" value="mRNA"/>
</dbReference>
<dbReference type="CCDS" id="CCDS20095.1"/>
<dbReference type="RefSeq" id="NP_001342479.1">
    <property type="nucleotide sequence ID" value="NM_001355550.2"/>
</dbReference>
<dbReference type="RefSeq" id="NP_001342480.1">
    <property type="nucleotide sequence ID" value="NM_001355551.2"/>
</dbReference>
<dbReference type="RefSeq" id="NP_001397528.1">
    <property type="nucleotide sequence ID" value="NM_001410599.1"/>
</dbReference>
<dbReference type="RefSeq" id="NP_001397529.1">
    <property type="nucleotide sequence ID" value="NM_001410600.1"/>
</dbReference>
<dbReference type="RefSeq" id="NP_001397530.1">
    <property type="nucleotide sequence ID" value="NM_001410601.1"/>
</dbReference>
<dbReference type="RefSeq" id="NP_001397531.1">
    <property type="nucleotide sequence ID" value="NM_001410602.1"/>
</dbReference>
<dbReference type="RefSeq" id="NP_036172.1">
    <property type="nucleotide sequence ID" value="NM_012042.5"/>
</dbReference>
<dbReference type="RefSeq" id="XP_006506251.1">
    <property type="nucleotide sequence ID" value="XM_006506188.3"/>
</dbReference>
<dbReference type="RefSeq" id="XP_006506252.1">
    <property type="nucleotide sequence ID" value="XM_006506189.3"/>
</dbReference>
<dbReference type="RefSeq" id="XP_006506253.1">
    <property type="nucleotide sequence ID" value="XM_006506190.3"/>
</dbReference>
<dbReference type="SMR" id="Q9WTX6"/>
<dbReference type="BioGRID" id="205088">
    <property type="interactions" value="107"/>
</dbReference>
<dbReference type="CORUM" id="Q9WTX6"/>
<dbReference type="DIP" id="DIP-39799N"/>
<dbReference type="FunCoup" id="Q9WTX6">
    <property type="interactions" value="3039"/>
</dbReference>
<dbReference type="IntAct" id="Q9WTX6">
    <property type="interactions" value="41"/>
</dbReference>
<dbReference type="MINT" id="Q9WTX6"/>
<dbReference type="STRING" id="10090.ENSMUSP00000031697"/>
<dbReference type="GlyGen" id="Q9WTX6">
    <property type="glycosylation" value="1 site, 1 O-linked glycan (1 site)"/>
</dbReference>
<dbReference type="iPTMnet" id="Q9WTX6"/>
<dbReference type="PhosphoSitePlus" id="Q9WTX6"/>
<dbReference type="SwissPalm" id="Q9WTX6"/>
<dbReference type="jPOST" id="Q9WTX6"/>
<dbReference type="PaxDb" id="10090-ENSMUSP00000031697"/>
<dbReference type="PeptideAtlas" id="Q9WTX6"/>
<dbReference type="ProteomicsDB" id="279208"/>
<dbReference type="Pumba" id="Q9WTX6"/>
<dbReference type="Antibodypedia" id="3630">
    <property type="antibodies" value="546 antibodies from 42 providers"/>
</dbReference>
<dbReference type="DNASU" id="26965"/>
<dbReference type="Ensembl" id="ENSMUST00000031697.9">
    <property type="protein sequence ID" value="ENSMUSP00000031697.9"/>
    <property type="gene ID" value="ENSMUSG00000029686.16"/>
</dbReference>
<dbReference type="GeneID" id="26965"/>
<dbReference type="KEGG" id="mmu:26965"/>
<dbReference type="UCSC" id="uc009bsz.1">
    <property type="organism name" value="mouse"/>
</dbReference>
<dbReference type="AGR" id="MGI:1349658"/>
<dbReference type="CTD" id="8454"/>
<dbReference type="MGI" id="MGI:1349658">
    <property type="gene designation" value="Cul1"/>
</dbReference>
<dbReference type="VEuPathDB" id="HostDB:ENSMUSG00000029686"/>
<dbReference type="eggNOG" id="KOG2166">
    <property type="taxonomic scope" value="Eukaryota"/>
</dbReference>
<dbReference type="GeneTree" id="ENSGT00940000154774"/>
<dbReference type="HOGENOM" id="CLU_004747_6_1_1"/>
<dbReference type="InParanoid" id="Q9WTX6"/>
<dbReference type="OMA" id="IREWDRY"/>
<dbReference type="OrthoDB" id="27073at2759"/>
<dbReference type="PhylomeDB" id="Q9WTX6"/>
<dbReference type="TreeFam" id="TF101151"/>
<dbReference type="Reactome" id="R-MMU-1169091">
    <property type="pathway name" value="Activation of NF-kappaB in B cells"/>
</dbReference>
<dbReference type="Reactome" id="R-MMU-1170546">
    <property type="pathway name" value="Prolactin receptor signaling"/>
</dbReference>
<dbReference type="Reactome" id="R-MMU-174113">
    <property type="pathway name" value="SCF-beta-TrCP mediated degradation of Emi1"/>
</dbReference>
<dbReference type="Reactome" id="R-MMU-187577">
    <property type="pathway name" value="SCF(Skp2)-mediated degradation of p27/p21"/>
</dbReference>
<dbReference type="Reactome" id="R-MMU-195253">
    <property type="pathway name" value="Degradation of beta-catenin by the destruction complex"/>
</dbReference>
<dbReference type="Reactome" id="R-MMU-202424">
    <property type="pathway name" value="Downstream TCR signaling"/>
</dbReference>
<dbReference type="Reactome" id="R-MMU-2565942">
    <property type="pathway name" value="Regulation of PLK1 Activity at G2/M Transition"/>
</dbReference>
<dbReference type="Reactome" id="R-MMU-2871837">
    <property type="pathway name" value="FCERI mediated NF-kB activation"/>
</dbReference>
<dbReference type="Reactome" id="R-MMU-5607761">
    <property type="pathway name" value="Dectin-1 mediated noncanonical NF-kB signaling"/>
</dbReference>
<dbReference type="Reactome" id="R-MMU-5607764">
    <property type="pathway name" value="CLEC7A (Dectin-1) signaling"/>
</dbReference>
<dbReference type="Reactome" id="R-MMU-5610780">
    <property type="pathway name" value="Degradation of GLI1 by the proteasome"/>
</dbReference>
<dbReference type="Reactome" id="R-MMU-5610785">
    <property type="pathway name" value="GLI3 is processed to GLI3R by the proteasome"/>
</dbReference>
<dbReference type="Reactome" id="R-MMU-5676590">
    <property type="pathway name" value="NIK--&gt;noncanonical NF-kB signaling"/>
</dbReference>
<dbReference type="Reactome" id="R-MMU-5684264">
    <property type="pathway name" value="MAP3K8 (TPL2)-dependent MAPK1/3 activation"/>
</dbReference>
<dbReference type="Reactome" id="R-MMU-68949">
    <property type="pathway name" value="Orc1 removal from chromatin"/>
</dbReference>
<dbReference type="Reactome" id="R-MMU-69231">
    <property type="pathway name" value="Cyclin D associated events in G1"/>
</dbReference>
<dbReference type="Reactome" id="R-MMU-8854050">
    <property type="pathway name" value="FBXL7 down-regulates AURKA during mitotic entry and in early mitosis"/>
</dbReference>
<dbReference type="Reactome" id="R-MMU-8939902">
    <property type="pathway name" value="Regulation of RUNX2 expression and activity"/>
</dbReference>
<dbReference type="Reactome" id="R-MMU-8951664">
    <property type="pathway name" value="Neddylation"/>
</dbReference>
<dbReference type="Reactome" id="R-MMU-9020702">
    <property type="pathway name" value="Interleukin-1 signaling"/>
</dbReference>
<dbReference type="Reactome" id="R-MMU-917937">
    <property type="pathway name" value="Iron uptake and transport"/>
</dbReference>
<dbReference type="Reactome" id="R-MMU-9708530">
    <property type="pathway name" value="Regulation of BACH1 activity"/>
</dbReference>
<dbReference type="Reactome" id="R-MMU-9762114">
    <property type="pathway name" value="GSK3B and BTRC:CUL1-mediated-degradation of NFE2L2"/>
</dbReference>
<dbReference type="Reactome" id="R-MMU-983168">
    <property type="pathway name" value="Antigen processing: Ubiquitination &amp; Proteasome degradation"/>
</dbReference>
<dbReference type="UniPathway" id="UPA00143"/>
<dbReference type="BioGRID-ORCS" id="26965">
    <property type="hits" value="18 hits in 80 CRISPR screens"/>
</dbReference>
<dbReference type="CD-CODE" id="01CA17F3">
    <property type="entry name" value="Centrosome"/>
</dbReference>
<dbReference type="ChiTaRS" id="Cul1">
    <property type="organism name" value="mouse"/>
</dbReference>
<dbReference type="PRO" id="PR:Q9WTX6"/>
<dbReference type="Proteomes" id="UP000000589">
    <property type="component" value="Chromosome 6"/>
</dbReference>
<dbReference type="RNAct" id="Q9WTX6">
    <property type="molecule type" value="protein"/>
</dbReference>
<dbReference type="Bgee" id="ENSMUSG00000029686">
    <property type="expression patterns" value="Expressed in secondary oocyte and 278 other cell types or tissues"/>
</dbReference>
<dbReference type="ExpressionAtlas" id="Q9WTX6">
    <property type="expression patterns" value="baseline and differential"/>
</dbReference>
<dbReference type="GO" id="GO:0031461">
    <property type="term" value="C:cullin-RING ubiquitin ligase complex"/>
    <property type="evidence" value="ECO:0000266"/>
    <property type="project" value="MGI"/>
</dbReference>
<dbReference type="GO" id="GO:1990452">
    <property type="term" value="C:Parkin-FBXW7-Cul1 ubiquitin ligase complex"/>
    <property type="evidence" value="ECO:0007669"/>
    <property type="project" value="Ensembl"/>
</dbReference>
<dbReference type="GO" id="GO:0005886">
    <property type="term" value="C:plasma membrane"/>
    <property type="evidence" value="ECO:0000250"/>
    <property type="project" value="UniProtKB"/>
</dbReference>
<dbReference type="GO" id="GO:0019005">
    <property type="term" value="C:SCF ubiquitin ligase complex"/>
    <property type="evidence" value="ECO:0000314"/>
    <property type="project" value="UniProtKB"/>
</dbReference>
<dbReference type="GO" id="GO:0160072">
    <property type="term" value="F:ubiquitin ligase complex scaffold activity"/>
    <property type="evidence" value="ECO:0007669"/>
    <property type="project" value="Ensembl"/>
</dbReference>
<dbReference type="GO" id="GO:0031625">
    <property type="term" value="F:ubiquitin protein ligase binding"/>
    <property type="evidence" value="ECO:0007669"/>
    <property type="project" value="Ensembl"/>
</dbReference>
<dbReference type="GO" id="GO:0009887">
    <property type="term" value="P:animal organ morphogenesis"/>
    <property type="evidence" value="ECO:0000315"/>
    <property type="project" value="MGI"/>
</dbReference>
<dbReference type="GO" id="GO:0006915">
    <property type="term" value="P:apoptotic process"/>
    <property type="evidence" value="ECO:0000315"/>
    <property type="project" value="MGI"/>
</dbReference>
<dbReference type="GO" id="GO:0008283">
    <property type="term" value="P:cell population proliferation"/>
    <property type="evidence" value="ECO:0000315"/>
    <property type="project" value="MGI"/>
</dbReference>
<dbReference type="GO" id="GO:0043123">
    <property type="term" value="P:positive regulation of canonical NF-kappaB signal transduction"/>
    <property type="evidence" value="ECO:0007669"/>
    <property type="project" value="Ensembl"/>
</dbReference>
<dbReference type="GO" id="GO:0070936">
    <property type="term" value="P:protein K48-linked ubiquitination"/>
    <property type="evidence" value="ECO:0000314"/>
    <property type="project" value="MGI"/>
</dbReference>
<dbReference type="GO" id="GO:0006513">
    <property type="term" value="P:protein monoubiquitination"/>
    <property type="evidence" value="ECO:0000316"/>
    <property type="project" value="MGI"/>
</dbReference>
<dbReference type="GO" id="GO:0031146">
    <property type="term" value="P:SCF-dependent proteasomal ubiquitin-dependent protein catabolic process"/>
    <property type="evidence" value="ECO:0000314"/>
    <property type="project" value="UniProtKB"/>
</dbReference>
<dbReference type="GO" id="GO:0006511">
    <property type="term" value="P:ubiquitin-dependent protein catabolic process"/>
    <property type="evidence" value="ECO:0000305"/>
    <property type="project" value="MGI"/>
</dbReference>
<dbReference type="FunFam" id="1.10.10.10:FF:000014">
    <property type="entry name" value="Cullin 1"/>
    <property type="match status" value="1"/>
</dbReference>
<dbReference type="FunFam" id="1.10.10.10:FF:000161">
    <property type="entry name" value="Cullin 1"/>
    <property type="match status" value="1"/>
</dbReference>
<dbReference type="FunFam" id="1.20.1310.10:FF:000007">
    <property type="entry name" value="Cullin 1"/>
    <property type="match status" value="1"/>
</dbReference>
<dbReference type="FunFam" id="1.20.1310.10:FF:000011">
    <property type="entry name" value="Cullin 1"/>
    <property type="match status" value="1"/>
</dbReference>
<dbReference type="FunFam" id="1.20.1310.10:FF:000019">
    <property type="entry name" value="Cullin 1"/>
    <property type="match status" value="1"/>
</dbReference>
<dbReference type="FunFam" id="3.30.230.130:FF:000003">
    <property type="entry name" value="Cullin 2"/>
    <property type="match status" value="1"/>
</dbReference>
<dbReference type="FunFam" id="1.20.1310.10:FF:000023">
    <property type="entry name" value="cullin-1"/>
    <property type="match status" value="1"/>
</dbReference>
<dbReference type="FunFam" id="4.10.1030.10:FF:000001">
    <property type="entry name" value="Putative Cullin-1"/>
    <property type="match status" value="1"/>
</dbReference>
<dbReference type="Gene3D" id="1.20.1310.10">
    <property type="entry name" value="Cullin Repeats"/>
    <property type="match status" value="4"/>
</dbReference>
<dbReference type="Gene3D" id="4.10.1030.10">
    <property type="entry name" value="Ring Box Chain A, domain 5"/>
    <property type="match status" value="1"/>
</dbReference>
<dbReference type="Gene3D" id="1.10.10.10">
    <property type="entry name" value="Winged helix-like DNA-binding domain superfamily/Winged helix DNA-binding domain"/>
    <property type="match status" value="2"/>
</dbReference>
<dbReference type="InterPro" id="IPR045093">
    <property type="entry name" value="Cullin"/>
</dbReference>
<dbReference type="InterPro" id="IPR016157">
    <property type="entry name" value="Cullin_CS"/>
</dbReference>
<dbReference type="InterPro" id="IPR016158">
    <property type="entry name" value="Cullin_homology"/>
</dbReference>
<dbReference type="InterPro" id="IPR036317">
    <property type="entry name" value="Cullin_homology_sf"/>
</dbReference>
<dbReference type="InterPro" id="IPR001373">
    <property type="entry name" value="Cullin_N"/>
</dbReference>
<dbReference type="InterPro" id="IPR019559">
    <property type="entry name" value="Cullin_neddylation_domain"/>
</dbReference>
<dbReference type="InterPro" id="IPR016159">
    <property type="entry name" value="Cullin_repeat-like_dom_sf"/>
</dbReference>
<dbReference type="InterPro" id="IPR036388">
    <property type="entry name" value="WH-like_DNA-bd_sf"/>
</dbReference>
<dbReference type="InterPro" id="IPR036390">
    <property type="entry name" value="WH_DNA-bd_sf"/>
</dbReference>
<dbReference type="PANTHER" id="PTHR11932">
    <property type="entry name" value="CULLIN"/>
    <property type="match status" value="1"/>
</dbReference>
<dbReference type="Pfam" id="PF00888">
    <property type="entry name" value="Cullin"/>
    <property type="match status" value="1"/>
</dbReference>
<dbReference type="Pfam" id="PF10557">
    <property type="entry name" value="Cullin_Nedd8"/>
    <property type="match status" value="1"/>
</dbReference>
<dbReference type="SMART" id="SM00182">
    <property type="entry name" value="CULLIN"/>
    <property type="match status" value="1"/>
</dbReference>
<dbReference type="SMART" id="SM00884">
    <property type="entry name" value="Cullin_Nedd8"/>
    <property type="match status" value="1"/>
</dbReference>
<dbReference type="SUPFAM" id="SSF75632">
    <property type="entry name" value="Cullin homology domain"/>
    <property type="match status" value="1"/>
</dbReference>
<dbReference type="SUPFAM" id="SSF74788">
    <property type="entry name" value="Cullin repeat-like"/>
    <property type="match status" value="1"/>
</dbReference>
<dbReference type="SUPFAM" id="SSF46785">
    <property type="entry name" value="Winged helix' DNA-binding domain"/>
    <property type="match status" value="1"/>
</dbReference>
<dbReference type="PROSITE" id="PS01256">
    <property type="entry name" value="CULLIN_1"/>
    <property type="match status" value="1"/>
</dbReference>
<dbReference type="PROSITE" id="PS50069">
    <property type="entry name" value="CULLIN_2"/>
    <property type="match status" value="1"/>
</dbReference>
<comment type="function">
    <text evidence="1 7 11">Core component of multiple cullin-RING-based SCF (SKP1-CUL1-F-box protein) E3 ubiquitin-protein ligase complexes, which mediate the ubiquitination of proteins involved in cell cycle progression, signal transduction and transcription. SCF complexes and ARIH1 collaborate in tandem to mediate ubiquitination of target proteins. In the SCF complex, serves as a rigid scaffold that organizes the SKP1-F-box protein and RBX1 subunits. May contribute to catalysis through positioning of the substrate and the ubiquitin-conjugating enzyme. The E3 ubiquitin-protein ligase activity of the complex is dependent on the neddylation of the cullin subunit and exchange of the substrate recognition component is mediated by TIP120A/CAND1. The functional specificity of the SCF complex depends on the F-box protein as substrate recognition component. SCF(BTRC) and SCF(FBXW11) direct ubiquitination of CTNNB1 and participate in Wnt signaling. SCF(FBXW11) directs ubiquitination of phosphorylated NFKBIA. SCF(BTRC) directs ubiquitination of NFKBIB, NFKBIE, ATF4, SMAD3, SMAD4, CDC25A, FBXO5 and probably NFKB2. SCF(BTRC) and/or SCF(FBXW11) direct ubiquitination of CEP68. SCF(SKP2) directs ubiquitination of phosphorylated CDKN1B/p27kip and is involved in regulation of G1/S transition. SCF(SKP2) directs ubiquitination of ORC1, CDT1, RBL2, ELF4, CDKN1A, RAG2, FOXO1A, and probably MYC and TAL1. SCF(FBXW7) directs ubiquitination of cyclin E, NOTCH1 released notch intracellular domain (NICD), and probably PSEN1. SCF(FBXW2) directs ubiquitination of GCM1. SCF(FBXO32) directs ubiquitination of MYOD1. SCF(FBXO7) directs ubiquitination of BIRC2 and DLGAP5. SCF(FBXO33) directs ubiquitination of YBX1. SCF(FBXO1) directs ubiquitination of BCL6 and DTL but does not seem to direct ubiquitination of TP53. SCF(BTRC) mediates the ubiquitination of NFKBIA at 'Lys-21' and 'Lys-22'; the degradation frees the associated NFKB1-RELA dimer to translocate into the nucleus and to activate transcription. SCF(CCNF) directs ubiquitination of CCP110. SCF(FBXL3) and SCF(FBXL21) direct ubiquitination of CRY1 and CRY2. SCF(FBXO9) directs ubiquitination of TTI1 and TELO2. SCF(FBXO10) directs ubiquitination of BCL2. Neddylated CUL1-RBX1 ubiquitinates p53/TP53 recruited by Cul7-RING(FBXW8) complex (By similarity). SCF(BTRC) directs 'Lys-48'-linked ubiquitination of UBR2 in the T-cell receptor signaling pathway (By similarity). The SCF(FBXO31) protein ligase complex specifically mediates the ubiquitination of proteins amidated at their C-terminus in response to oxidative stress (By similarity).</text>
</comment>
<comment type="pathway">
    <text evidence="7">Protein modification; protein ubiquitination.</text>
</comment>
<comment type="subunit">
    <text evidence="1 4 5 6 7 8 10 11 12">Component of multiple Cul1-RING E3 ubiquitin-protein ligase complexes commonly known as SCF (SKP1-CUL1-F-box) complexes, consisting of CUL1, SKP1, RBX1 and a variable F-box domain-containing protein as substrate-specific subunit (PubMed:10097128, PubMed:12140560, PubMed:16880526, PubMed:23452855, PubMed:23452856). Component of the SCF(FBXW11) complex containing FBXW11. Component of the SCF(SKP2) complex containing SKP2, in which it interacts directly with SKP1, SKP2 and RBX1. Component of the SCF(FBXW2) complex containing FBXW2. Component of the SCF(FBXO32) complex containing FBXO32. Component of the probable SCF(FBXO7) complex containing FBXO7. Component of the SCF(FBXO10) complex containing FBXO10. Component of the SCF(FBXO11) complex containing FBXO11. Component of the SCF(FBXO25) complex containing FBXO25. Component of the SCF(FBXO33) complex containing FBXO33. Component of the probable SCF(FBXO4) complex containing FBXO4. Component of the SCF(FBXO44) complex, composed of SKP1, CUL1 and FBXO44 (By similarity). Component of the SCF(BTRC) complex, composed of SKP1, CUL1 and BTRC (PubMed:10097128, PubMed:11735228). This complex binds phosphorylated NFKBIA (PubMed:10097128). Part of a SCF complex consisting of CUL1, RBX1, SKP1 and FBXO2. Component of a SCF(SKP2)-like complex containing CUL1, SKP1, TRIM21 and SKP2. Component of the SCF(FBXO17) complex, composed of SKP1, CUL1 and FBXO17. Component of the SCF(FBXO27) complex, composed of SKP1, CUL1 and FBXO27. Component of the SCF(CCNF) complex consisting of CUL1, RBX1, SKP1 and CCNF (By similarity). Interacts with CCNF (By similarity). Component of the SCF(FBXL3) complex composed of CUL1, SKP1, RBX1 and FBXL3. Component of the SCF(FBXL21) complex composed of CUL1, SKP1, RBX1 and FBXL21. Component of the SCF(FBXO9) composed of CUL1, SKP1, RBX1 and FBXO9. Component of the SCF(FBXW7) composed of CUL1, SKP1, RBX1 and FBXW7. Component of the SCF(FBXO31) complex composed of CUL1, SKP1, RBX1 and FBXO31. Interacts with CHEK2; mediates CHEK2 ubiquitination and regulates its function. Part of a complex with TIP120A/CAND1 and RBX1. The unneddylated form interacts with TIP120A/CAND1 and the interaction mediates the exchange of the F-box substrate-specific subunit. Can self-associate (By similarity). Interacts with FBXW8 (PubMed:16880526). Interacts with RNF7 (By similarity). Interacts with TRIM21 (By similarity). Interacts with COPS2 (PubMed:11967155). Interacts with DCUN1D1 and UBE2M. Interacts with DCUN1D3. Interacts with DCUN1D4 (By similarity). Identified in a complex with RBX1 and GLMN (By similarity). Interacts with CEP68 as part of the SCF(FBXW11) complex; the interaction is probably mediated by FBXW11 and the complex also contains CDK5RAP2 and PCNT. Interacts (when neddylated) with ARIH1; leading to activate the E3 ligase activity of ARIH1. Interacts with COPS9. Interacts with UBXN1 (By similarity). Interacts with KAT7, probably as part of an SCF complex; the interaction mediates KAT7 ubiquitination (PubMed:23319590). Interacts with NOTCH2 (By similarity). Part of a complex that contains DCUN1D5, CUL1 and RBX1; this interaction is bridged by CUL1 (By similarity). Interacts (unneddylated form) with DCUN1D1, DCUN1D2, DCUN1D3, DCUN1D4 and DCUN1D5; these interactions promote the cullin neddylation (By similarity). Interacts (via the C-terminal domain) with CUL7; the interaction seems to be mediated by FBXW8; it is likely specific to FBXW8, but not other F-box proteins (By similarity). Interacts with UBR2, as part of SCF(BTRC) complex; the interaction mediates 'Lys-48'-linked ubiquitination of UBR2 and is regulated by DUSP22 in the T-cell receptor signaling pathway (By similarity).</text>
</comment>
<comment type="subunit">
    <text evidence="9">(Microbial infection) Interacts with murine cytomegalovirus M48.</text>
</comment>
<comment type="interaction">
    <interactant intactId="EBI-1551052">
        <id>Q9WTX6</id>
    </interactant>
    <interactant intactId="EBI-1993627">
        <id>O94888</id>
        <label>UBXN7</label>
    </interactant>
    <organismsDiffer>true</organismsDiffer>
    <experiments>3</experiments>
</comment>
<comment type="interaction">
    <interactant intactId="EBI-1551052">
        <id>Q9WTX6</id>
    </interactant>
    <interactant intactId="EBI-355164">
        <id>P55072</id>
        <label>VCP</label>
    </interactant>
    <organismsDiffer>true</organismsDiffer>
    <experiments>2</experiments>
</comment>
<comment type="tissue specificity">
    <text evidence="13">Embryo fibroblasts and embryo preadipocytes.</text>
</comment>
<comment type="domain">
    <text evidence="1">The Cullin neddylation domain restrains the RING domain of RBX1 in the E3 ubiquitin-protein ligase complex; this restraint is removed upon neddylation of the cullin.</text>
</comment>
<comment type="PTM">
    <text evidence="1 9">Neddylated; which enhances the ubiquitination activity of SCF (PubMed:20190741). Neddylation prevents binding of the inhibitor CAND1 (By similarity). Neddylation leads to structural rearrangment in the complex that allows interaction between the E2 ubiquitin-conjugating enzyme and the acceptor ubiquitin (By similarity). Deneddylated via its interaction with the COP9 signalosome (CSN) complex (PubMed:20190741).</text>
</comment>
<comment type="PTM">
    <text evidence="9">(Microbial infection) Deneddylated by murine cytomegalovirus M48 leading to a S-phase-like environment that is required for efficient replication of the viral genome.</text>
</comment>
<comment type="similarity">
    <text evidence="3">Belongs to the cullin family.</text>
</comment>